<sequence>MSTDNKQSLPAITLAAIGVVYGDIGTSPLYTLRECLSGQFGFGVERDAVFGFLSLIFWLLIFVVSIKYLTFVMRADNAGEGGILTLMSLAGRNTSARTTSMLVIMGLIGGSFFYGEVVITPAISVMSAIEGLEIVAPQLDTWIVPLSIIVLTLLFMIQKHGTGMVGKLFAPIMLTWFLILAVLGLRSIIANPEVLHALNPVWAVRFFLEYKTVSFIALGAVVLSITGVEALYADMGHFGKFPIRLAWFTVVLPSLVLNYFGQGALLLKHPEAIKNPFFLLAPDWALIPLLILAALATVIASQAVISGVFSLTRQAVRLGYLSPMRIIHTSEMESGQIYIPFVNWLLYFAVVVVIVSFEHSSNLAAAYGIAVTGTMVLTSILSTTVARKNWHWNKYFVALILIAFLCVDIPLFSANLDKLLSGGWLPLSLGLIMFTIMTTWKSERFRLLRRMHEHGNSLEAMIASLEKSPPVRVPGTAVYMSRALSVIPFALLHNLKHNKVLHERVILLTLRTEDAPYVHNVRRVQIEQLSPTFWRVVASYGWRETPNVEEVFHRCGLEGLSCRMMETSFFMSHESLIVGKRPWYLRLRGKLYLLLQRNALRAPDQFEIPPNRVIELGTQVEI</sequence>
<protein>
    <recommendedName>
        <fullName evidence="1">Low affinity potassium transport system protein Kup</fullName>
    </recommendedName>
    <alternativeName>
        <fullName evidence="1">Kup system potassium uptake protein</fullName>
    </alternativeName>
</protein>
<accession>Q5PJX7</accession>
<feature type="chain" id="PRO_0000209055" description="Low affinity potassium transport system protein Kup">
    <location>
        <begin position="1"/>
        <end position="622"/>
    </location>
</feature>
<feature type="transmembrane region" description="Helical" evidence="1">
    <location>
        <begin position="9"/>
        <end position="29"/>
    </location>
</feature>
<feature type="transmembrane region" description="Helical" evidence="1">
    <location>
        <begin position="49"/>
        <end position="69"/>
    </location>
</feature>
<feature type="transmembrane region" description="Helical" evidence="1">
    <location>
        <begin position="103"/>
        <end position="123"/>
    </location>
</feature>
<feature type="transmembrane region" description="Helical" evidence="1">
    <location>
        <begin position="137"/>
        <end position="157"/>
    </location>
</feature>
<feature type="transmembrane region" description="Helical" evidence="1">
    <location>
        <begin position="165"/>
        <end position="185"/>
    </location>
</feature>
<feature type="transmembrane region" description="Helical" evidence="1">
    <location>
        <begin position="213"/>
        <end position="233"/>
    </location>
</feature>
<feature type="transmembrane region" description="Helical" evidence="1">
    <location>
        <begin position="247"/>
        <end position="267"/>
    </location>
</feature>
<feature type="transmembrane region" description="Helical" evidence="1">
    <location>
        <begin position="276"/>
        <end position="296"/>
    </location>
</feature>
<feature type="transmembrane region" description="Helical" evidence="1">
    <location>
        <begin position="337"/>
        <end position="357"/>
    </location>
</feature>
<feature type="transmembrane region" description="Helical" evidence="1">
    <location>
        <begin position="363"/>
        <end position="383"/>
    </location>
</feature>
<feature type="transmembrane region" description="Helical" evidence="1">
    <location>
        <begin position="396"/>
        <end position="416"/>
    </location>
</feature>
<feature type="transmembrane region" description="Helical" evidence="1">
    <location>
        <begin position="419"/>
        <end position="439"/>
    </location>
</feature>
<organism>
    <name type="scientific">Salmonella paratyphi A (strain ATCC 9150 / SARB42)</name>
    <dbReference type="NCBI Taxonomy" id="295319"/>
    <lineage>
        <taxon>Bacteria</taxon>
        <taxon>Pseudomonadati</taxon>
        <taxon>Pseudomonadota</taxon>
        <taxon>Gammaproteobacteria</taxon>
        <taxon>Enterobacterales</taxon>
        <taxon>Enterobacteriaceae</taxon>
        <taxon>Salmonella</taxon>
    </lineage>
</organism>
<comment type="function">
    <text evidence="1">Responsible for the low-affinity transport of potassium into the cell. Likely operates as a K(+):H(+) symporter.</text>
</comment>
<comment type="catalytic activity">
    <reaction evidence="1">
        <text>K(+)(in) + H(+)(in) = K(+)(out) + H(+)(out)</text>
        <dbReference type="Rhea" id="RHEA:28490"/>
        <dbReference type="ChEBI" id="CHEBI:15378"/>
        <dbReference type="ChEBI" id="CHEBI:29103"/>
    </reaction>
    <physiologicalReaction direction="right-to-left" evidence="1">
        <dbReference type="Rhea" id="RHEA:28492"/>
    </physiologicalReaction>
</comment>
<comment type="subcellular location">
    <subcellularLocation>
        <location evidence="1">Cell inner membrane</location>
        <topology evidence="1">Multi-pass membrane protein</topology>
    </subcellularLocation>
</comment>
<comment type="similarity">
    <text evidence="1 2">Belongs to the HAK/KUP transporter (TC 2.A.72) family.</text>
</comment>
<evidence type="ECO:0000255" key="1">
    <source>
        <dbReference type="HAMAP-Rule" id="MF_01522"/>
    </source>
</evidence>
<evidence type="ECO:0000305" key="2"/>
<dbReference type="EMBL" id="CP000026">
    <property type="protein sequence ID" value="AAV79511.1"/>
    <property type="molecule type" value="Genomic_DNA"/>
</dbReference>
<dbReference type="RefSeq" id="WP_000102338.1">
    <property type="nucleotide sequence ID" value="NC_006511.1"/>
</dbReference>
<dbReference type="KEGG" id="spt:SPA3719"/>
<dbReference type="HOGENOM" id="CLU_008142_4_2_6"/>
<dbReference type="Proteomes" id="UP000008185">
    <property type="component" value="Chromosome"/>
</dbReference>
<dbReference type="GO" id="GO:0005886">
    <property type="term" value="C:plasma membrane"/>
    <property type="evidence" value="ECO:0007669"/>
    <property type="project" value="UniProtKB-SubCell"/>
</dbReference>
<dbReference type="GO" id="GO:0015079">
    <property type="term" value="F:potassium ion transmembrane transporter activity"/>
    <property type="evidence" value="ECO:0007669"/>
    <property type="project" value="UniProtKB-UniRule"/>
</dbReference>
<dbReference type="GO" id="GO:0015293">
    <property type="term" value="F:symporter activity"/>
    <property type="evidence" value="ECO:0007669"/>
    <property type="project" value="UniProtKB-UniRule"/>
</dbReference>
<dbReference type="HAMAP" id="MF_01522">
    <property type="entry name" value="Kup"/>
    <property type="match status" value="1"/>
</dbReference>
<dbReference type="InterPro" id="IPR003855">
    <property type="entry name" value="K+_transporter"/>
</dbReference>
<dbReference type="InterPro" id="IPR053952">
    <property type="entry name" value="K_trans_C"/>
</dbReference>
<dbReference type="InterPro" id="IPR053951">
    <property type="entry name" value="K_trans_N"/>
</dbReference>
<dbReference type="InterPro" id="IPR023051">
    <property type="entry name" value="Kup"/>
</dbReference>
<dbReference type="NCBIfam" id="TIGR00794">
    <property type="entry name" value="kup"/>
    <property type="match status" value="1"/>
</dbReference>
<dbReference type="NCBIfam" id="NF008015">
    <property type="entry name" value="PRK10745.1"/>
    <property type="match status" value="1"/>
</dbReference>
<dbReference type="PANTHER" id="PTHR30540:SF79">
    <property type="entry name" value="LOW AFFINITY POTASSIUM TRANSPORT SYSTEM PROTEIN KUP"/>
    <property type="match status" value="1"/>
</dbReference>
<dbReference type="PANTHER" id="PTHR30540">
    <property type="entry name" value="OSMOTIC STRESS POTASSIUM TRANSPORTER"/>
    <property type="match status" value="1"/>
</dbReference>
<dbReference type="Pfam" id="PF02705">
    <property type="entry name" value="K_trans"/>
    <property type="match status" value="1"/>
</dbReference>
<dbReference type="Pfam" id="PF22776">
    <property type="entry name" value="K_trans_C"/>
    <property type="match status" value="1"/>
</dbReference>
<proteinExistence type="inferred from homology"/>
<gene>
    <name evidence="1" type="primary">kup</name>
    <name type="ordered locus">SPA3719</name>
</gene>
<name>KUP_SALPA</name>
<keyword id="KW-0997">Cell inner membrane</keyword>
<keyword id="KW-1003">Cell membrane</keyword>
<keyword id="KW-0406">Ion transport</keyword>
<keyword id="KW-0472">Membrane</keyword>
<keyword id="KW-0630">Potassium</keyword>
<keyword id="KW-0633">Potassium transport</keyword>
<keyword id="KW-0769">Symport</keyword>
<keyword id="KW-0812">Transmembrane</keyword>
<keyword id="KW-1133">Transmembrane helix</keyword>
<keyword id="KW-0813">Transport</keyword>
<reference key="1">
    <citation type="journal article" date="2004" name="Nat. Genet.">
        <title>Comparison of genome degradation in Paratyphi A and Typhi, human-restricted serovars of Salmonella enterica that cause typhoid.</title>
        <authorList>
            <person name="McClelland M."/>
            <person name="Sanderson K.E."/>
            <person name="Clifton S.W."/>
            <person name="Latreille P."/>
            <person name="Porwollik S."/>
            <person name="Sabo A."/>
            <person name="Meyer R."/>
            <person name="Bieri T."/>
            <person name="Ozersky P."/>
            <person name="McLellan M."/>
            <person name="Harkins C.R."/>
            <person name="Wang C."/>
            <person name="Nguyen C."/>
            <person name="Berghoff A."/>
            <person name="Elliott G."/>
            <person name="Kohlberg S."/>
            <person name="Strong C."/>
            <person name="Du F."/>
            <person name="Carter J."/>
            <person name="Kremizki C."/>
            <person name="Layman D."/>
            <person name="Leonard S."/>
            <person name="Sun H."/>
            <person name="Fulton L."/>
            <person name="Nash W."/>
            <person name="Miner T."/>
            <person name="Minx P."/>
            <person name="Delehaunty K."/>
            <person name="Fronick C."/>
            <person name="Magrini V."/>
            <person name="Nhan M."/>
            <person name="Warren W."/>
            <person name="Florea L."/>
            <person name="Spieth J."/>
            <person name="Wilson R.K."/>
        </authorList>
    </citation>
    <scope>NUCLEOTIDE SEQUENCE [LARGE SCALE GENOMIC DNA]</scope>
    <source>
        <strain>ATCC 9150 / SARB42</strain>
    </source>
</reference>